<accession>Q9HY63</accession>
<evidence type="ECO:0000255" key="1">
    <source>
        <dbReference type="HAMAP-Rule" id="MF_01166"/>
    </source>
</evidence>
<reference key="1">
    <citation type="journal article" date="2000" name="Nature">
        <title>Complete genome sequence of Pseudomonas aeruginosa PAO1, an opportunistic pathogen.</title>
        <authorList>
            <person name="Stover C.K."/>
            <person name="Pham X.-Q.T."/>
            <person name="Erwin A.L."/>
            <person name="Mizoguchi S.D."/>
            <person name="Warrener P."/>
            <person name="Hickey M.J."/>
            <person name="Brinkman F.S.L."/>
            <person name="Hufnagle W.O."/>
            <person name="Kowalik D.J."/>
            <person name="Lagrou M."/>
            <person name="Garber R.L."/>
            <person name="Goltry L."/>
            <person name="Tolentino E."/>
            <person name="Westbrock-Wadman S."/>
            <person name="Yuan Y."/>
            <person name="Brody L.L."/>
            <person name="Coulter S.N."/>
            <person name="Folger K.R."/>
            <person name="Kas A."/>
            <person name="Larbig K."/>
            <person name="Lim R.M."/>
            <person name="Smith K.A."/>
            <person name="Spencer D.H."/>
            <person name="Wong G.K.-S."/>
            <person name="Wu Z."/>
            <person name="Paulsen I.T."/>
            <person name="Reizer J."/>
            <person name="Saier M.H. Jr."/>
            <person name="Hancock R.E.W."/>
            <person name="Lory S."/>
            <person name="Olson M.V."/>
        </authorList>
    </citation>
    <scope>NUCLEOTIDE SEQUENCE [LARGE SCALE GENOMIC DNA]</scope>
    <source>
        <strain>ATCC 15692 / DSM 22644 / CIP 104116 / JCM 14847 / LMG 12228 / 1C / PRS 101 / PAO1</strain>
    </source>
</reference>
<gene>
    <name evidence="1" type="primary">arnA</name>
    <name type="ordered locus">PA3554</name>
</gene>
<sequence length="662" mass="74361">MTSKAVVFAYHDIGCTGIEALLNAGYEIAAVFTHADDPRENTFYASVARLCAERGIPLHAPEDVNHPLWLERIRQLRPDFLFSFYYRRLLGAELLACAARGAYNLHGSLLPRYRGRAPANWVLVNGETQTGVTLHRMIERADAGPILAQQAVAIDPEDTALSLHGKLRKAAGALLRDSLPLLALGVLPEVEQDESQASHFGRRTPADGLLDWHRPARQLYDLVRAVTQPYPGAFCQVGEQKLIVWSAEVVAGNHGREPGSVLSCDPLRIACGEDSLVLRFGQRGERGLYLAGTQLATELGLVEGARLRGAACSPQRRTRVLILGVNGFIGNHLSERLLRDGRYEVHGMDIGSDAIERLKADPHFHFVEGDIGIHSEWLEYHVKKCDVILPLVAIATPIEYTRNPLRVFELDFEENLRIVRYCVKYGKRVVFPSTSEVYGMCQDPDFDEDRSNLVVGPINKQRWIYSVSKQLLDRVIWAYGQQGLRFTLFRPFNWMGPRLDRLDSARIGSSRAITQLILHLVEGTPIRLVDGGAQKRCFTDVDDGIEALARIIDNRDGRCDGQIVNIGNPDNEASIRQLGEELLRQFEAHPLRAQFPPFAGFREVESRSFYGDGYQDVAHRKPSIDNARRLLDWQPTIELRETIGKTLDFFLHEALREREAQA</sequence>
<proteinExistence type="inferred from homology"/>
<protein>
    <recommendedName>
        <fullName evidence="1">Bifunctional polymyxin resistance protein ArnA</fullName>
    </recommendedName>
    <domain>
        <recommendedName>
            <fullName evidence="1">UDP-4-amino-4-deoxy-L-arabinose formyltransferase</fullName>
            <ecNumber evidence="1">2.1.2.13</ecNumber>
        </recommendedName>
        <alternativeName>
            <fullName evidence="1">ArnAFT</fullName>
        </alternativeName>
        <alternativeName>
            <fullName evidence="1">UDP-L-Ara4N formyltransferase</fullName>
        </alternativeName>
    </domain>
    <domain>
        <recommendedName>
            <fullName evidence="1">UDP-glucuronic acid oxidase, UDP-4-keto-hexauronic acid decarboxylating</fullName>
            <ecNumber evidence="1">1.1.1.305</ecNumber>
        </recommendedName>
        <alternativeName>
            <fullName evidence="1">ArnADH</fullName>
        </alternativeName>
        <alternativeName>
            <fullName evidence="1">UDP-GlcUA decarboxylase</fullName>
        </alternativeName>
        <alternativeName>
            <fullName evidence="1">UDP-glucuronic acid dehydrogenase</fullName>
        </alternativeName>
    </domain>
</protein>
<name>ARNA_PSEAE</name>
<comment type="function">
    <text evidence="1">Bifunctional enzyme that catalyzes the oxidative decarboxylation of UDP-glucuronic acid (UDP-GlcUA) to UDP-4-keto-arabinose (UDP-Ara4O) and the addition of a formyl group to UDP-4-amino-4-deoxy-L-arabinose (UDP-L-Ara4N) to form UDP-L-4-formamido-arabinose (UDP-L-Ara4FN). The modified arabinose is attached to lipid A and is required for resistance to polymyxin and cationic antimicrobial peptides.</text>
</comment>
<comment type="catalytic activity">
    <reaction evidence="1">
        <text>UDP-alpha-D-glucuronate + NAD(+) = UDP-beta-L-threo-pentopyranos-4-ulose + CO2 + NADH</text>
        <dbReference type="Rhea" id="RHEA:24702"/>
        <dbReference type="ChEBI" id="CHEBI:16526"/>
        <dbReference type="ChEBI" id="CHEBI:57540"/>
        <dbReference type="ChEBI" id="CHEBI:57945"/>
        <dbReference type="ChEBI" id="CHEBI:58052"/>
        <dbReference type="ChEBI" id="CHEBI:58710"/>
        <dbReference type="EC" id="1.1.1.305"/>
    </reaction>
</comment>
<comment type="catalytic activity">
    <reaction evidence="1">
        <text>UDP-4-amino-4-deoxy-beta-L-arabinose + (6R)-10-formyltetrahydrofolate = UDP-4-deoxy-4-formamido-beta-L-arabinose + (6S)-5,6,7,8-tetrahydrofolate + H(+)</text>
        <dbReference type="Rhea" id="RHEA:24706"/>
        <dbReference type="ChEBI" id="CHEBI:15378"/>
        <dbReference type="ChEBI" id="CHEBI:57453"/>
        <dbReference type="ChEBI" id="CHEBI:58708"/>
        <dbReference type="ChEBI" id="CHEBI:58709"/>
        <dbReference type="ChEBI" id="CHEBI:195366"/>
        <dbReference type="EC" id="2.1.2.13"/>
    </reaction>
</comment>
<comment type="pathway">
    <text evidence="1">Nucleotide-sugar biosynthesis; UDP-4-deoxy-4-formamido-beta-L-arabinose biosynthesis; UDP-4-deoxy-4-formamido-beta-L-arabinose from UDP-alpha-D-glucuronate: step 1/3.</text>
</comment>
<comment type="pathway">
    <text evidence="1">Nucleotide-sugar biosynthesis; UDP-4-deoxy-4-formamido-beta-L-arabinose biosynthesis; UDP-4-deoxy-4-formamido-beta-L-arabinose from UDP-alpha-D-glucuronate: step 3/3.</text>
</comment>
<comment type="pathway">
    <text evidence="1">Bacterial outer membrane biogenesis; lipopolysaccharide biosynthesis.</text>
</comment>
<comment type="subunit">
    <text evidence="1">Homohexamer, formed by a dimer of trimers.</text>
</comment>
<comment type="similarity">
    <text evidence="1">In the N-terminal section; belongs to the Fmt family. UDP-L-Ara4N formyltransferase subfamily.</text>
</comment>
<comment type="similarity">
    <text evidence="1">In the C-terminal section; belongs to the NAD(P)-dependent epimerase/dehydratase family. UDP-glucuronic acid decarboxylase subfamily.</text>
</comment>
<feature type="chain" id="PRO_0000083103" description="Bifunctional polymyxin resistance protein ArnA">
    <location>
        <begin position="1"/>
        <end position="662"/>
    </location>
</feature>
<feature type="region of interest" description="Formyltransferase ArnAFT">
    <location>
        <begin position="1"/>
        <end position="307"/>
    </location>
</feature>
<feature type="region of interest" description="Dehydrogenase ArnADH">
    <location>
        <begin position="316"/>
        <end position="662"/>
    </location>
</feature>
<feature type="active site" description="Proton donor; for formyltransferase activity" evidence="1">
    <location>
        <position position="106"/>
    </location>
</feature>
<feature type="active site" description="Proton acceptor; for decarboxylase activity" evidence="1">
    <location>
        <position position="436"/>
    </location>
</feature>
<feature type="active site" description="Proton donor; for decarboxylase activity" evidence="1">
    <location>
        <position position="620"/>
    </location>
</feature>
<feature type="binding site" evidence="1">
    <location>
        <position position="116"/>
    </location>
    <ligand>
        <name>(6R)-10-formyltetrahydrofolate</name>
        <dbReference type="ChEBI" id="CHEBI:195366"/>
    </ligand>
</feature>
<feature type="binding site" evidence="1">
    <location>
        <begin position="138"/>
        <end position="142"/>
    </location>
    <ligand>
        <name>(6R)-10-formyltetrahydrofolate</name>
        <dbReference type="ChEBI" id="CHEBI:195366"/>
    </ligand>
</feature>
<feature type="binding site" evidence="1">
    <location>
        <position position="349"/>
    </location>
    <ligand>
        <name>NAD(+)</name>
        <dbReference type="ChEBI" id="CHEBI:57540"/>
    </ligand>
</feature>
<feature type="binding site" evidence="1">
    <location>
        <begin position="370"/>
        <end position="371"/>
    </location>
    <ligand>
        <name>NAD(+)</name>
        <dbReference type="ChEBI" id="CHEBI:57540"/>
    </ligand>
</feature>
<feature type="binding site" evidence="1">
    <location>
        <position position="395"/>
    </location>
    <ligand>
        <name>UDP-alpha-D-glucuronate</name>
        <dbReference type="ChEBI" id="CHEBI:58052"/>
    </ligand>
</feature>
<feature type="binding site" evidence="1">
    <location>
        <position position="400"/>
    </location>
    <ligand>
        <name>UDP-alpha-D-glucuronate</name>
        <dbReference type="ChEBI" id="CHEBI:58052"/>
    </ligand>
</feature>
<feature type="binding site" evidence="1">
    <location>
        <begin position="434"/>
        <end position="435"/>
    </location>
    <ligand>
        <name>UDP-alpha-D-glucuronate</name>
        <dbReference type="ChEBI" id="CHEBI:58052"/>
    </ligand>
</feature>
<feature type="binding site" evidence="1">
    <location>
        <position position="462"/>
    </location>
    <ligand>
        <name>UDP-alpha-D-glucuronate</name>
        <dbReference type="ChEBI" id="CHEBI:58052"/>
    </ligand>
</feature>
<feature type="binding site" evidence="1">
    <location>
        <position position="493"/>
    </location>
    <ligand>
        <name>UDP-alpha-D-glucuronate</name>
        <dbReference type="ChEBI" id="CHEBI:58052"/>
    </ligand>
</feature>
<feature type="binding site" evidence="1">
    <location>
        <begin position="527"/>
        <end position="536"/>
    </location>
    <ligand>
        <name>UDP-alpha-D-glucuronate</name>
        <dbReference type="ChEBI" id="CHEBI:58052"/>
    </ligand>
</feature>
<feature type="binding site" evidence="1">
    <location>
        <position position="614"/>
    </location>
    <ligand>
        <name>UDP-alpha-D-glucuronate</name>
        <dbReference type="ChEBI" id="CHEBI:58052"/>
    </ligand>
</feature>
<feature type="site" description="Transition state stabilizer" evidence="1">
    <location>
        <position position="104"/>
    </location>
</feature>
<feature type="site" description="Raises pKa of active site His" evidence="1">
    <location>
        <position position="142"/>
    </location>
</feature>
<organism>
    <name type="scientific">Pseudomonas aeruginosa (strain ATCC 15692 / DSM 22644 / CIP 104116 / JCM 14847 / LMG 12228 / 1C / PRS 101 / PAO1)</name>
    <dbReference type="NCBI Taxonomy" id="208964"/>
    <lineage>
        <taxon>Bacteria</taxon>
        <taxon>Pseudomonadati</taxon>
        <taxon>Pseudomonadota</taxon>
        <taxon>Gammaproteobacteria</taxon>
        <taxon>Pseudomonadales</taxon>
        <taxon>Pseudomonadaceae</taxon>
        <taxon>Pseudomonas</taxon>
    </lineage>
</organism>
<keyword id="KW-0046">Antibiotic resistance</keyword>
<keyword id="KW-0441">Lipid A biosynthesis</keyword>
<keyword id="KW-0444">Lipid biosynthesis</keyword>
<keyword id="KW-0443">Lipid metabolism</keyword>
<keyword id="KW-0448">Lipopolysaccharide biosynthesis</keyword>
<keyword id="KW-0511">Multifunctional enzyme</keyword>
<keyword id="KW-0520">NAD</keyword>
<keyword id="KW-0560">Oxidoreductase</keyword>
<keyword id="KW-1185">Reference proteome</keyword>
<keyword id="KW-0808">Transferase</keyword>
<dbReference type="EC" id="2.1.2.13" evidence="1"/>
<dbReference type="EC" id="1.1.1.305" evidence="1"/>
<dbReference type="EMBL" id="AE004091">
    <property type="protein sequence ID" value="AAG06942.1"/>
    <property type="molecule type" value="Genomic_DNA"/>
</dbReference>
<dbReference type="PIR" id="E83201">
    <property type="entry name" value="E83201"/>
</dbReference>
<dbReference type="RefSeq" id="NP_252244.1">
    <property type="nucleotide sequence ID" value="NC_002516.2"/>
</dbReference>
<dbReference type="RefSeq" id="WP_003112879.1">
    <property type="nucleotide sequence ID" value="NZ_QZGE01000001.1"/>
</dbReference>
<dbReference type="SMR" id="Q9HY63"/>
<dbReference type="FunCoup" id="Q9HY63">
    <property type="interactions" value="390"/>
</dbReference>
<dbReference type="STRING" id="208964.PA3554"/>
<dbReference type="CARD" id="ARO:3002985">
    <property type="molecule name" value="arnA"/>
    <property type="mechanism identifier" value="ARO:0001001"/>
    <property type="mechanism name" value="antibiotic target alteration"/>
</dbReference>
<dbReference type="PaxDb" id="208964-PA3554"/>
<dbReference type="GeneID" id="878473"/>
<dbReference type="KEGG" id="pae:PA3554"/>
<dbReference type="PATRIC" id="fig|208964.12.peg.3719"/>
<dbReference type="PseudoCAP" id="PA3554"/>
<dbReference type="HOGENOM" id="CLU_007383_23_0_6"/>
<dbReference type="InParanoid" id="Q9HY63"/>
<dbReference type="OrthoDB" id="9802815at2"/>
<dbReference type="PhylomeDB" id="Q9HY63"/>
<dbReference type="BioCyc" id="PAER208964:G1FZ6-3622-MONOMER"/>
<dbReference type="UniPathway" id="UPA00030"/>
<dbReference type="UniPathway" id="UPA00032">
    <property type="reaction ID" value="UER00492"/>
</dbReference>
<dbReference type="UniPathway" id="UPA00032">
    <property type="reaction ID" value="UER00494"/>
</dbReference>
<dbReference type="Proteomes" id="UP000002438">
    <property type="component" value="Chromosome"/>
</dbReference>
<dbReference type="GO" id="GO:0016020">
    <property type="term" value="C:membrane"/>
    <property type="evidence" value="ECO:0007669"/>
    <property type="project" value="GOC"/>
</dbReference>
<dbReference type="GO" id="GO:0016831">
    <property type="term" value="F:carboxy-lyase activity"/>
    <property type="evidence" value="ECO:0007669"/>
    <property type="project" value="InterPro"/>
</dbReference>
<dbReference type="GO" id="GO:0099619">
    <property type="term" value="F:UDP-4-amino-4-deoxy-L-arabinose formyltransferase activity"/>
    <property type="evidence" value="ECO:0007669"/>
    <property type="project" value="UniProtKB-EC"/>
</dbReference>
<dbReference type="GO" id="GO:0099618">
    <property type="term" value="F:UDP-glucuronate dehydrogenase activity"/>
    <property type="evidence" value="ECO:0007669"/>
    <property type="project" value="UniProtKB-EC"/>
</dbReference>
<dbReference type="GO" id="GO:0009245">
    <property type="term" value="P:lipid A biosynthetic process"/>
    <property type="evidence" value="ECO:0007669"/>
    <property type="project" value="UniProtKB-KW"/>
</dbReference>
<dbReference type="GO" id="GO:0009103">
    <property type="term" value="P:lipopolysaccharide biosynthetic process"/>
    <property type="evidence" value="ECO:0007669"/>
    <property type="project" value="UniProtKB-UniRule"/>
</dbReference>
<dbReference type="GO" id="GO:0046677">
    <property type="term" value="P:response to antibiotic"/>
    <property type="evidence" value="ECO:0007669"/>
    <property type="project" value="UniProtKB-KW"/>
</dbReference>
<dbReference type="CDD" id="cd08702">
    <property type="entry name" value="Arna_FMT_C"/>
    <property type="match status" value="1"/>
</dbReference>
<dbReference type="CDD" id="cd05257">
    <property type="entry name" value="Arna_like_SDR_e"/>
    <property type="match status" value="1"/>
</dbReference>
<dbReference type="FunFam" id="3.40.50.720:FF:000197">
    <property type="entry name" value="Bifunctional polymyxin resistance protein ArnA"/>
    <property type="match status" value="1"/>
</dbReference>
<dbReference type="Gene3D" id="3.40.50.12230">
    <property type="match status" value="1"/>
</dbReference>
<dbReference type="Gene3D" id="3.40.50.720">
    <property type="entry name" value="NAD(P)-binding Rossmann-like Domain"/>
    <property type="match status" value="1"/>
</dbReference>
<dbReference type="HAMAP" id="MF_01166">
    <property type="entry name" value="ArnA"/>
    <property type="match status" value="1"/>
</dbReference>
<dbReference type="InterPro" id="IPR045869">
    <property type="entry name" value="Arna-like_SDR_e"/>
</dbReference>
<dbReference type="InterPro" id="IPR021168">
    <property type="entry name" value="Bifun_polymyxin_resist_ArnA"/>
</dbReference>
<dbReference type="InterPro" id="IPR001509">
    <property type="entry name" value="Epimerase_deHydtase"/>
</dbReference>
<dbReference type="InterPro" id="IPR005793">
    <property type="entry name" value="Formyl_trans_C"/>
</dbReference>
<dbReference type="InterPro" id="IPR002376">
    <property type="entry name" value="Formyl_transf_N"/>
</dbReference>
<dbReference type="InterPro" id="IPR036477">
    <property type="entry name" value="Formyl_transf_N_sf"/>
</dbReference>
<dbReference type="InterPro" id="IPR011034">
    <property type="entry name" value="Formyl_transferase-like_C_sf"/>
</dbReference>
<dbReference type="InterPro" id="IPR050177">
    <property type="entry name" value="Lipid_A_modif_metabolic_enz"/>
</dbReference>
<dbReference type="InterPro" id="IPR036291">
    <property type="entry name" value="NAD(P)-bd_dom_sf"/>
</dbReference>
<dbReference type="NCBIfam" id="NF005414">
    <property type="entry name" value="PRK06988.1"/>
    <property type="match status" value="1"/>
</dbReference>
<dbReference type="NCBIfam" id="NF005998">
    <property type="entry name" value="PRK08125.1"/>
    <property type="match status" value="1"/>
</dbReference>
<dbReference type="NCBIfam" id="NF008872">
    <property type="entry name" value="PRK11908.1"/>
    <property type="match status" value="1"/>
</dbReference>
<dbReference type="PANTHER" id="PTHR43245">
    <property type="entry name" value="BIFUNCTIONAL POLYMYXIN RESISTANCE PROTEIN ARNA"/>
    <property type="match status" value="1"/>
</dbReference>
<dbReference type="PANTHER" id="PTHR43245:SF13">
    <property type="entry name" value="UDP-D-APIOSE_UDP-D-XYLOSE SYNTHASE 2"/>
    <property type="match status" value="1"/>
</dbReference>
<dbReference type="Pfam" id="PF01370">
    <property type="entry name" value="Epimerase"/>
    <property type="match status" value="1"/>
</dbReference>
<dbReference type="Pfam" id="PF02911">
    <property type="entry name" value="Formyl_trans_C"/>
    <property type="match status" value="1"/>
</dbReference>
<dbReference type="Pfam" id="PF00551">
    <property type="entry name" value="Formyl_trans_N"/>
    <property type="match status" value="1"/>
</dbReference>
<dbReference type="PIRSF" id="PIRSF036506">
    <property type="entry name" value="Bifun_polymyxin_resist_ArnA"/>
    <property type="match status" value="1"/>
</dbReference>
<dbReference type="SUPFAM" id="SSF50486">
    <property type="entry name" value="FMT C-terminal domain-like"/>
    <property type="match status" value="1"/>
</dbReference>
<dbReference type="SUPFAM" id="SSF53328">
    <property type="entry name" value="Formyltransferase"/>
    <property type="match status" value="1"/>
</dbReference>
<dbReference type="SUPFAM" id="SSF51735">
    <property type="entry name" value="NAD(P)-binding Rossmann-fold domains"/>
    <property type="match status" value="1"/>
</dbReference>